<gene>
    <name evidence="1" type="primary">msrB</name>
    <name type="ordered locus">Csal_1350</name>
</gene>
<reference key="1">
    <citation type="journal article" date="2011" name="Stand. Genomic Sci.">
        <title>Complete genome sequence of the halophilic and highly halotolerant Chromohalobacter salexigens type strain (1H11(T)).</title>
        <authorList>
            <person name="Copeland A."/>
            <person name="O'Connor K."/>
            <person name="Lucas S."/>
            <person name="Lapidus A."/>
            <person name="Berry K.W."/>
            <person name="Detter J.C."/>
            <person name="Del Rio T.G."/>
            <person name="Hammon N."/>
            <person name="Dalin E."/>
            <person name="Tice H."/>
            <person name="Pitluck S."/>
            <person name="Bruce D."/>
            <person name="Goodwin L."/>
            <person name="Han C."/>
            <person name="Tapia R."/>
            <person name="Saunders E."/>
            <person name="Schmutz J."/>
            <person name="Brettin T."/>
            <person name="Larimer F."/>
            <person name="Land M."/>
            <person name="Hauser L."/>
            <person name="Vargas C."/>
            <person name="Nieto J.J."/>
            <person name="Kyrpides N.C."/>
            <person name="Ivanova N."/>
            <person name="Goker M."/>
            <person name="Klenk H.P."/>
            <person name="Csonka L.N."/>
            <person name="Woyke T."/>
        </authorList>
    </citation>
    <scope>NUCLEOTIDE SEQUENCE [LARGE SCALE GENOMIC DNA]</scope>
    <source>
        <strain>ATCC BAA-138 / DSM 3043 / CIP 106854 / NCIMB 13768 / 1H11</strain>
    </source>
</reference>
<proteinExistence type="inferred from homology"/>
<name>MSRB_CHRSD</name>
<feature type="chain" id="PRO_1000184548" description="Peptide methionine sulfoxide reductase MsrB">
    <location>
        <begin position="1"/>
        <end position="133"/>
    </location>
</feature>
<feature type="domain" description="MsrB" evidence="2">
    <location>
        <begin position="9"/>
        <end position="132"/>
    </location>
</feature>
<feature type="region of interest" description="Disordered" evidence="3">
    <location>
        <begin position="1"/>
        <end position="36"/>
    </location>
</feature>
<feature type="compositionally biased region" description="Basic and acidic residues" evidence="3">
    <location>
        <begin position="1"/>
        <end position="12"/>
    </location>
</feature>
<feature type="active site" description="Nucleophile" evidence="2">
    <location>
        <position position="121"/>
    </location>
</feature>
<feature type="binding site" evidence="2">
    <location>
        <position position="48"/>
    </location>
    <ligand>
        <name>Zn(2+)</name>
        <dbReference type="ChEBI" id="CHEBI:29105"/>
    </ligand>
</feature>
<feature type="binding site" evidence="2">
    <location>
        <position position="51"/>
    </location>
    <ligand>
        <name>Zn(2+)</name>
        <dbReference type="ChEBI" id="CHEBI:29105"/>
    </ligand>
</feature>
<feature type="binding site" evidence="2">
    <location>
        <position position="97"/>
    </location>
    <ligand>
        <name>Zn(2+)</name>
        <dbReference type="ChEBI" id="CHEBI:29105"/>
    </ligand>
</feature>
<feature type="binding site" evidence="2">
    <location>
        <position position="100"/>
    </location>
    <ligand>
        <name>Zn(2+)</name>
        <dbReference type="ChEBI" id="CHEBI:29105"/>
    </ligand>
</feature>
<sequence length="133" mass="15229">MSEKVQKSEHEWQQQLTPEQYRVTREKGTERPFTGDYQVSDEQGIYHCVCCGAPLFENEHKFDAGCGWPSFDRPLADASIEEHLDTSHGMRRIEVTCRRCDSHLGHVFPDGPQDTTGLRYCINSVSLDFHPGE</sequence>
<evidence type="ECO:0000255" key="1">
    <source>
        <dbReference type="HAMAP-Rule" id="MF_01400"/>
    </source>
</evidence>
<evidence type="ECO:0000255" key="2">
    <source>
        <dbReference type="PROSITE-ProRule" id="PRU01126"/>
    </source>
</evidence>
<evidence type="ECO:0000256" key="3">
    <source>
        <dbReference type="SAM" id="MobiDB-lite"/>
    </source>
</evidence>
<protein>
    <recommendedName>
        <fullName evidence="1">Peptide methionine sulfoxide reductase MsrB</fullName>
        <ecNumber evidence="1">1.8.4.12</ecNumber>
    </recommendedName>
    <alternativeName>
        <fullName evidence="1">Peptide-methionine (R)-S-oxide reductase</fullName>
    </alternativeName>
</protein>
<dbReference type="EC" id="1.8.4.12" evidence="1"/>
<dbReference type="EMBL" id="CP000285">
    <property type="protein sequence ID" value="ABE58705.1"/>
    <property type="molecule type" value="Genomic_DNA"/>
</dbReference>
<dbReference type="RefSeq" id="WP_011506651.1">
    <property type="nucleotide sequence ID" value="NC_007963.1"/>
</dbReference>
<dbReference type="SMR" id="Q1QXV3"/>
<dbReference type="STRING" id="290398.Csal_1350"/>
<dbReference type="GeneID" id="95334088"/>
<dbReference type="KEGG" id="csa:Csal_1350"/>
<dbReference type="eggNOG" id="COG0229">
    <property type="taxonomic scope" value="Bacteria"/>
</dbReference>
<dbReference type="HOGENOM" id="CLU_031040_8_5_6"/>
<dbReference type="OrthoDB" id="9785497at2"/>
<dbReference type="Proteomes" id="UP000000239">
    <property type="component" value="Chromosome"/>
</dbReference>
<dbReference type="GO" id="GO:0005737">
    <property type="term" value="C:cytoplasm"/>
    <property type="evidence" value="ECO:0007669"/>
    <property type="project" value="TreeGrafter"/>
</dbReference>
<dbReference type="GO" id="GO:0033743">
    <property type="term" value="F:peptide-methionine (R)-S-oxide reductase activity"/>
    <property type="evidence" value="ECO:0007669"/>
    <property type="project" value="UniProtKB-UniRule"/>
</dbReference>
<dbReference type="GO" id="GO:0008270">
    <property type="term" value="F:zinc ion binding"/>
    <property type="evidence" value="ECO:0007669"/>
    <property type="project" value="UniProtKB-UniRule"/>
</dbReference>
<dbReference type="GO" id="GO:0030091">
    <property type="term" value="P:protein repair"/>
    <property type="evidence" value="ECO:0007669"/>
    <property type="project" value="InterPro"/>
</dbReference>
<dbReference type="GO" id="GO:0006979">
    <property type="term" value="P:response to oxidative stress"/>
    <property type="evidence" value="ECO:0007669"/>
    <property type="project" value="InterPro"/>
</dbReference>
<dbReference type="FunFam" id="2.170.150.20:FF:000009">
    <property type="entry name" value="Peptide-methionine (R)-S-oxide reductase"/>
    <property type="match status" value="1"/>
</dbReference>
<dbReference type="Gene3D" id="2.170.150.20">
    <property type="entry name" value="Peptide methionine sulfoxide reductase"/>
    <property type="match status" value="1"/>
</dbReference>
<dbReference type="HAMAP" id="MF_01400">
    <property type="entry name" value="MsrB"/>
    <property type="match status" value="1"/>
</dbReference>
<dbReference type="InterPro" id="IPR028427">
    <property type="entry name" value="Met_Sox_Rdtase_MsrB"/>
</dbReference>
<dbReference type="InterPro" id="IPR002579">
    <property type="entry name" value="Met_Sox_Rdtase_MsrB_dom"/>
</dbReference>
<dbReference type="InterPro" id="IPR011057">
    <property type="entry name" value="Mss4-like_sf"/>
</dbReference>
<dbReference type="NCBIfam" id="TIGR00357">
    <property type="entry name" value="peptide-methionine (R)-S-oxide reductase MsrB"/>
    <property type="match status" value="1"/>
</dbReference>
<dbReference type="PANTHER" id="PTHR10173">
    <property type="entry name" value="METHIONINE SULFOXIDE REDUCTASE"/>
    <property type="match status" value="1"/>
</dbReference>
<dbReference type="PANTHER" id="PTHR10173:SF52">
    <property type="entry name" value="METHIONINE-R-SULFOXIDE REDUCTASE B1"/>
    <property type="match status" value="1"/>
</dbReference>
<dbReference type="Pfam" id="PF01641">
    <property type="entry name" value="SelR"/>
    <property type="match status" value="1"/>
</dbReference>
<dbReference type="SUPFAM" id="SSF51316">
    <property type="entry name" value="Mss4-like"/>
    <property type="match status" value="1"/>
</dbReference>
<dbReference type="PROSITE" id="PS51790">
    <property type="entry name" value="MSRB"/>
    <property type="match status" value="1"/>
</dbReference>
<comment type="catalytic activity">
    <reaction evidence="1">
        <text>L-methionyl-[protein] + [thioredoxin]-disulfide + H2O = L-methionyl-(R)-S-oxide-[protein] + [thioredoxin]-dithiol</text>
        <dbReference type="Rhea" id="RHEA:24164"/>
        <dbReference type="Rhea" id="RHEA-COMP:10698"/>
        <dbReference type="Rhea" id="RHEA-COMP:10700"/>
        <dbReference type="Rhea" id="RHEA-COMP:12313"/>
        <dbReference type="Rhea" id="RHEA-COMP:12314"/>
        <dbReference type="ChEBI" id="CHEBI:15377"/>
        <dbReference type="ChEBI" id="CHEBI:16044"/>
        <dbReference type="ChEBI" id="CHEBI:29950"/>
        <dbReference type="ChEBI" id="CHEBI:45764"/>
        <dbReference type="ChEBI" id="CHEBI:50058"/>
        <dbReference type="EC" id="1.8.4.12"/>
    </reaction>
</comment>
<comment type="cofactor">
    <cofactor evidence="1">
        <name>Zn(2+)</name>
        <dbReference type="ChEBI" id="CHEBI:29105"/>
    </cofactor>
    <text evidence="1">Binds 1 zinc ion per subunit. The zinc ion is important for the structural integrity of the protein.</text>
</comment>
<comment type="similarity">
    <text evidence="1">Belongs to the MsrB Met sulfoxide reductase family.</text>
</comment>
<organism>
    <name type="scientific">Chromohalobacter salexigens (strain ATCC BAA-138 / DSM 3043 / CIP 106854 / NCIMB 13768 / 1H11)</name>
    <dbReference type="NCBI Taxonomy" id="290398"/>
    <lineage>
        <taxon>Bacteria</taxon>
        <taxon>Pseudomonadati</taxon>
        <taxon>Pseudomonadota</taxon>
        <taxon>Gammaproteobacteria</taxon>
        <taxon>Oceanospirillales</taxon>
        <taxon>Halomonadaceae</taxon>
        <taxon>Chromohalobacter</taxon>
    </lineage>
</organism>
<keyword id="KW-0479">Metal-binding</keyword>
<keyword id="KW-0560">Oxidoreductase</keyword>
<keyword id="KW-1185">Reference proteome</keyword>
<keyword id="KW-0862">Zinc</keyword>
<accession>Q1QXV3</accession>